<comment type="cofactor">
    <cofactor evidence="1">
        <name>Zn(2+)</name>
        <dbReference type="ChEBI" id="CHEBI:29105"/>
    </cofactor>
    <text evidence="1">Binds 1 zinc ion per subunit.</text>
</comment>
<comment type="subcellular location">
    <subcellularLocation>
        <location evidence="1">Cell inner membrane</location>
        <topology evidence="1">Multi-pass membrane protein</topology>
    </subcellularLocation>
</comment>
<comment type="similarity">
    <text evidence="1">Belongs to the peptidase M48B family.</text>
</comment>
<proteinExistence type="inferred from homology"/>
<dbReference type="EC" id="3.4.24.-" evidence="1"/>
<dbReference type="EMBL" id="AP009153">
    <property type="protein sequence ID" value="BAH39851.1"/>
    <property type="molecule type" value="Genomic_DNA"/>
</dbReference>
<dbReference type="STRING" id="379066.GAU_2809"/>
<dbReference type="KEGG" id="gau:GAU_2809"/>
<dbReference type="eggNOG" id="COG0501">
    <property type="taxonomic scope" value="Bacteria"/>
</dbReference>
<dbReference type="HOGENOM" id="CLU_042266_3_0_0"/>
<dbReference type="Proteomes" id="UP000002209">
    <property type="component" value="Chromosome"/>
</dbReference>
<dbReference type="GO" id="GO:0005886">
    <property type="term" value="C:plasma membrane"/>
    <property type="evidence" value="ECO:0007669"/>
    <property type="project" value="UniProtKB-SubCell"/>
</dbReference>
<dbReference type="GO" id="GO:0004222">
    <property type="term" value="F:metalloendopeptidase activity"/>
    <property type="evidence" value="ECO:0007669"/>
    <property type="project" value="UniProtKB-UniRule"/>
</dbReference>
<dbReference type="GO" id="GO:0008270">
    <property type="term" value="F:zinc ion binding"/>
    <property type="evidence" value="ECO:0007669"/>
    <property type="project" value="UniProtKB-UniRule"/>
</dbReference>
<dbReference type="GO" id="GO:0006508">
    <property type="term" value="P:proteolysis"/>
    <property type="evidence" value="ECO:0007669"/>
    <property type="project" value="UniProtKB-KW"/>
</dbReference>
<dbReference type="CDD" id="cd07336">
    <property type="entry name" value="M48B_HtpX_like"/>
    <property type="match status" value="1"/>
</dbReference>
<dbReference type="Gene3D" id="3.30.2010.10">
    <property type="entry name" value="Metalloproteases ('zincins'), catalytic domain"/>
    <property type="match status" value="1"/>
</dbReference>
<dbReference type="HAMAP" id="MF_00188">
    <property type="entry name" value="Pept_M48_protease_HtpX"/>
    <property type="match status" value="1"/>
</dbReference>
<dbReference type="InterPro" id="IPR050083">
    <property type="entry name" value="HtpX_protease"/>
</dbReference>
<dbReference type="InterPro" id="IPR022919">
    <property type="entry name" value="Pept_M48_protease_HtpX"/>
</dbReference>
<dbReference type="InterPro" id="IPR001915">
    <property type="entry name" value="Peptidase_M48"/>
</dbReference>
<dbReference type="PANTHER" id="PTHR43221">
    <property type="entry name" value="PROTEASE HTPX"/>
    <property type="match status" value="1"/>
</dbReference>
<dbReference type="PANTHER" id="PTHR43221:SF1">
    <property type="entry name" value="PROTEASE HTPX"/>
    <property type="match status" value="1"/>
</dbReference>
<dbReference type="Pfam" id="PF01435">
    <property type="entry name" value="Peptidase_M48"/>
    <property type="match status" value="1"/>
</dbReference>
<evidence type="ECO:0000255" key="1">
    <source>
        <dbReference type="HAMAP-Rule" id="MF_00188"/>
    </source>
</evidence>
<keyword id="KW-0997">Cell inner membrane</keyword>
<keyword id="KW-1003">Cell membrane</keyword>
<keyword id="KW-0378">Hydrolase</keyword>
<keyword id="KW-0472">Membrane</keyword>
<keyword id="KW-0479">Metal-binding</keyword>
<keyword id="KW-0482">Metalloprotease</keyword>
<keyword id="KW-0645">Protease</keyword>
<keyword id="KW-1185">Reference proteome</keyword>
<keyword id="KW-0812">Transmembrane</keyword>
<keyword id="KW-1133">Transmembrane helix</keyword>
<keyword id="KW-0862">Zinc</keyword>
<organism>
    <name type="scientific">Gemmatimonas aurantiaca (strain DSM 14586 / JCM 11422 / NBRC 100505 / T-27)</name>
    <dbReference type="NCBI Taxonomy" id="379066"/>
    <lineage>
        <taxon>Bacteria</taxon>
        <taxon>Pseudomonadati</taxon>
        <taxon>Gemmatimonadota</taxon>
        <taxon>Gemmatimonadia</taxon>
        <taxon>Gemmatimonadales</taxon>
        <taxon>Gemmatimonadaceae</taxon>
        <taxon>Gemmatimonas</taxon>
    </lineage>
</organism>
<feature type="chain" id="PRO_1000203974" description="Protease HtpX homolog">
    <location>
        <begin position="1"/>
        <end position="279"/>
    </location>
</feature>
<feature type="transmembrane region" description="Helical" evidence="1">
    <location>
        <begin position="6"/>
        <end position="26"/>
    </location>
</feature>
<feature type="transmembrane region" description="Helical" evidence="1">
    <location>
        <begin position="29"/>
        <end position="49"/>
    </location>
</feature>
<feature type="transmembrane region" description="Helical" evidence="1">
    <location>
        <begin position="145"/>
        <end position="165"/>
    </location>
</feature>
<feature type="transmembrane region" description="Helical" evidence="1">
    <location>
        <begin position="176"/>
        <end position="196"/>
    </location>
</feature>
<feature type="active site" evidence="1">
    <location>
        <position position="131"/>
    </location>
</feature>
<feature type="binding site" evidence="1">
    <location>
        <position position="130"/>
    </location>
    <ligand>
        <name>Zn(2+)</name>
        <dbReference type="ChEBI" id="CHEBI:29105"/>
        <note>catalytic</note>
    </ligand>
</feature>
<feature type="binding site" evidence="1">
    <location>
        <position position="134"/>
    </location>
    <ligand>
        <name>Zn(2+)</name>
        <dbReference type="ChEBI" id="CHEBI:29105"/>
        <note>catalytic</note>
    </ligand>
</feature>
<feature type="binding site" evidence="1">
    <location>
        <position position="201"/>
    </location>
    <ligand>
        <name>Zn(2+)</name>
        <dbReference type="ChEBI" id="CHEBI:29105"/>
        <note>catalytic</note>
    </ligand>
</feature>
<sequence>MNNIKVFVLMAGLTGLVVAIGQALGGGQGAILALLLSAGMNLFMYWGSSSMVLRSYGAQVVTAQDAPELYEMVDRLRQRAGLPMPTVAIAPQDQPNAFATGRNPENSVVCVTQGIMRALSKDELEGVIAHELAHIKNRDMLLQTIAATMAGAVSNLAQFAFFFGGRSDDDDGVHPVAGIAMLIIGPIVAMVIQFAISRQREFKADAVGAEISGRPLSLANALLKLESGARRIPMQVSPSAATLAIVNPLAAFSMRGISKWMSTHPPTAERVAALQALAA</sequence>
<reference key="1">
    <citation type="submission" date="2006-03" db="EMBL/GenBank/DDBJ databases">
        <title>Complete genome sequence of Gemmatimonas aurantiaca T-27 that represents a novel phylum Gemmatimonadetes.</title>
        <authorList>
            <person name="Takasaki K."/>
            <person name="Ichikawa N."/>
            <person name="Miura H."/>
            <person name="Matsushita S."/>
            <person name="Watanabe Y."/>
            <person name="Oguchi A."/>
            <person name="Ankai A."/>
            <person name="Yashiro I."/>
            <person name="Takahashi M."/>
            <person name="Terui Y."/>
            <person name="Fukui S."/>
            <person name="Yokoyama H."/>
            <person name="Tanikawa S."/>
            <person name="Hanada S."/>
            <person name="Kamagata Y."/>
            <person name="Fujita N."/>
        </authorList>
    </citation>
    <scope>NUCLEOTIDE SEQUENCE [LARGE SCALE GENOMIC DNA]</scope>
    <source>
        <strain>DSM 14586 / JCM 11422 / NBRC 100505 / T-27</strain>
    </source>
</reference>
<protein>
    <recommendedName>
        <fullName evidence="1">Protease HtpX homolog</fullName>
        <ecNumber evidence="1">3.4.24.-</ecNumber>
    </recommendedName>
</protein>
<name>HTPX_GEMAT</name>
<gene>
    <name evidence="1" type="primary">htpX</name>
    <name type="ordered locus">GAU_2809</name>
</gene>
<accession>C1ABH4</accession>